<name>CYOE_SHIBS</name>
<accession>Q325H3</accession>
<keyword id="KW-0997">Cell inner membrane</keyword>
<keyword id="KW-1003">Cell membrane</keyword>
<keyword id="KW-0350">Heme biosynthesis</keyword>
<keyword id="KW-0472">Membrane</keyword>
<keyword id="KW-0808">Transferase</keyword>
<keyword id="KW-0812">Transmembrane</keyword>
<keyword id="KW-1133">Transmembrane helix</keyword>
<proteinExistence type="inferred from homology"/>
<organism>
    <name type="scientific">Shigella boydii serotype 4 (strain Sb227)</name>
    <dbReference type="NCBI Taxonomy" id="300268"/>
    <lineage>
        <taxon>Bacteria</taxon>
        <taxon>Pseudomonadati</taxon>
        <taxon>Pseudomonadota</taxon>
        <taxon>Gammaproteobacteria</taxon>
        <taxon>Enterobacterales</taxon>
        <taxon>Enterobacteriaceae</taxon>
        <taxon>Shigella</taxon>
    </lineage>
</organism>
<reference key="1">
    <citation type="journal article" date="2005" name="Nucleic Acids Res.">
        <title>Genome dynamics and diversity of Shigella species, the etiologic agents of bacillary dysentery.</title>
        <authorList>
            <person name="Yang F."/>
            <person name="Yang J."/>
            <person name="Zhang X."/>
            <person name="Chen L."/>
            <person name="Jiang Y."/>
            <person name="Yan Y."/>
            <person name="Tang X."/>
            <person name="Wang J."/>
            <person name="Xiong Z."/>
            <person name="Dong J."/>
            <person name="Xue Y."/>
            <person name="Zhu Y."/>
            <person name="Xu X."/>
            <person name="Sun L."/>
            <person name="Chen S."/>
            <person name="Nie H."/>
            <person name="Peng J."/>
            <person name="Xu J."/>
            <person name="Wang Y."/>
            <person name="Yuan Z."/>
            <person name="Wen Y."/>
            <person name="Yao Z."/>
            <person name="Shen Y."/>
            <person name="Qiang B."/>
            <person name="Hou Y."/>
            <person name="Yu J."/>
            <person name="Jin Q."/>
        </authorList>
    </citation>
    <scope>NUCLEOTIDE SEQUENCE [LARGE SCALE GENOMIC DNA]</scope>
    <source>
        <strain>Sb227</strain>
    </source>
</reference>
<gene>
    <name evidence="1" type="primary">cyoE</name>
    <name type="ordered locus">SBO_0322</name>
</gene>
<sequence>MMFKQYLQVTKPGIIFGNLISVIGGFLLASKGSIDYPLFIYTLVGVSLVVASGCVFNNYIDRDIDRKMERTKNRVLVKGLISPAVSLVYATLLGIAGFMLLWFGANPLACWLGVMGFVVYVGVYSLYMKRHSVYGTLIGSLSGAAPPVIGYCAVTGEFDSGAAILLAIFSLWQMPHSYAIAIFRFKDYQAANIPVLPVVKGISVAKNHITLYIIAFAVATLMLSLGGYAGYKYLVVAAAVSVWWLGMALRGYKVADDRIWARKLFGFSIIAITALSVMMSVDFMVPDSHTLLAAVW</sequence>
<comment type="function">
    <text evidence="1">Converts heme B (protoheme IX) to heme O by substitution of the vinyl group on carbon 2 of heme B porphyrin ring with a hydroxyethyl farnesyl side group.</text>
</comment>
<comment type="catalytic activity">
    <reaction evidence="1">
        <text>heme b + (2E,6E)-farnesyl diphosphate + H2O = Fe(II)-heme o + diphosphate</text>
        <dbReference type="Rhea" id="RHEA:28070"/>
        <dbReference type="ChEBI" id="CHEBI:15377"/>
        <dbReference type="ChEBI" id="CHEBI:33019"/>
        <dbReference type="ChEBI" id="CHEBI:60344"/>
        <dbReference type="ChEBI" id="CHEBI:60530"/>
        <dbReference type="ChEBI" id="CHEBI:175763"/>
        <dbReference type="EC" id="2.5.1.141"/>
    </reaction>
</comment>
<comment type="pathway">
    <text evidence="1">Porphyrin-containing compound metabolism; heme O biosynthesis; heme O from protoheme: step 1/1.</text>
</comment>
<comment type="subcellular location">
    <subcellularLocation>
        <location evidence="1">Cell inner membrane</location>
        <topology evidence="1">Multi-pass membrane protein</topology>
    </subcellularLocation>
</comment>
<comment type="miscellaneous">
    <text evidence="1">Carbon 2 of the heme B porphyrin ring is defined according to the Fischer nomenclature.</text>
</comment>
<comment type="similarity">
    <text evidence="1">Belongs to the UbiA prenyltransferase family. Protoheme IX farnesyltransferase subfamily.</text>
</comment>
<protein>
    <recommendedName>
        <fullName evidence="1">Protoheme IX farnesyltransferase</fullName>
        <ecNumber evidence="1">2.5.1.141</ecNumber>
    </recommendedName>
    <alternativeName>
        <fullName evidence="1">Heme B farnesyltransferase</fullName>
    </alternativeName>
    <alternativeName>
        <fullName evidence="1">Heme O synthase</fullName>
    </alternativeName>
</protein>
<dbReference type="EC" id="2.5.1.141" evidence="1"/>
<dbReference type="EMBL" id="CP000036">
    <property type="protein sequence ID" value="ABB65035.1"/>
    <property type="molecule type" value="Genomic_DNA"/>
</dbReference>
<dbReference type="RefSeq" id="WP_000971336.1">
    <property type="nucleotide sequence ID" value="NC_007613.1"/>
</dbReference>
<dbReference type="SMR" id="Q325H3"/>
<dbReference type="GeneID" id="75202853"/>
<dbReference type="KEGG" id="sbo:SBO_0322"/>
<dbReference type="HOGENOM" id="CLU_029631_0_0_6"/>
<dbReference type="UniPathway" id="UPA00834">
    <property type="reaction ID" value="UER00712"/>
</dbReference>
<dbReference type="Proteomes" id="UP000007067">
    <property type="component" value="Chromosome"/>
</dbReference>
<dbReference type="GO" id="GO:0005886">
    <property type="term" value="C:plasma membrane"/>
    <property type="evidence" value="ECO:0007669"/>
    <property type="project" value="UniProtKB-SubCell"/>
</dbReference>
<dbReference type="GO" id="GO:0008495">
    <property type="term" value="F:protoheme IX farnesyltransferase activity"/>
    <property type="evidence" value="ECO:0007669"/>
    <property type="project" value="UniProtKB-UniRule"/>
</dbReference>
<dbReference type="GO" id="GO:0048034">
    <property type="term" value="P:heme O biosynthetic process"/>
    <property type="evidence" value="ECO:0007669"/>
    <property type="project" value="UniProtKB-UniRule"/>
</dbReference>
<dbReference type="CDD" id="cd13957">
    <property type="entry name" value="PT_UbiA_Cox10"/>
    <property type="match status" value="1"/>
</dbReference>
<dbReference type="FunFam" id="1.10.357.140:FF:000001">
    <property type="entry name" value="Protoheme IX farnesyltransferase"/>
    <property type="match status" value="1"/>
</dbReference>
<dbReference type="Gene3D" id="1.10.357.140">
    <property type="entry name" value="UbiA prenyltransferase"/>
    <property type="match status" value="1"/>
</dbReference>
<dbReference type="HAMAP" id="MF_00154">
    <property type="entry name" value="CyoE_CtaB"/>
    <property type="match status" value="1"/>
</dbReference>
<dbReference type="InterPro" id="IPR006369">
    <property type="entry name" value="Protohaem_IX_farnesylTrfase"/>
</dbReference>
<dbReference type="InterPro" id="IPR000537">
    <property type="entry name" value="UbiA_prenyltransferase"/>
</dbReference>
<dbReference type="InterPro" id="IPR030470">
    <property type="entry name" value="UbiA_prenylTrfase_CS"/>
</dbReference>
<dbReference type="InterPro" id="IPR044878">
    <property type="entry name" value="UbiA_sf"/>
</dbReference>
<dbReference type="NCBIfam" id="TIGR01473">
    <property type="entry name" value="cyoE_ctaB"/>
    <property type="match status" value="1"/>
</dbReference>
<dbReference type="NCBIfam" id="NF003348">
    <property type="entry name" value="PRK04375.1-1"/>
    <property type="match status" value="1"/>
</dbReference>
<dbReference type="PANTHER" id="PTHR43448">
    <property type="entry name" value="PROTOHEME IX FARNESYLTRANSFERASE, MITOCHONDRIAL"/>
    <property type="match status" value="1"/>
</dbReference>
<dbReference type="PANTHER" id="PTHR43448:SF2">
    <property type="entry name" value="PROTOHEME IX FARNESYLTRANSFERASE, MITOCHONDRIAL"/>
    <property type="match status" value="1"/>
</dbReference>
<dbReference type="Pfam" id="PF01040">
    <property type="entry name" value="UbiA"/>
    <property type="match status" value="1"/>
</dbReference>
<dbReference type="PROSITE" id="PS00943">
    <property type="entry name" value="UBIA"/>
    <property type="match status" value="1"/>
</dbReference>
<feature type="chain" id="PRO_0000326957" description="Protoheme IX farnesyltransferase">
    <location>
        <begin position="1"/>
        <end position="296"/>
    </location>
</feature>
<feature type="topological domain" description="Cytoplasmic" evidence="1">
    <location>
        <begin position="1"/>
        <end position="9"/>
    </location>
</feature>
<feature type="transmembrane region" description="Helical" evidence="1">
    <location>
        <begin position="10"/>
        <end position="28"/>
    </location>
</feature>
<feature type="topological domain" description="Periplasmic" evidence="1">
    <location>
        <begin position="29"/>
        <end position="37"/>
    </location>
</feature>
<feature type="transmembrane region" description="Helical" evidence="1">
    <location>
        <begin position="38"/>
        <end position="56"/>
    </location>
</feature>
<feature type="topological domain" description="Cytoplasmic" evidence="1">
    <location>
        <begin position="57"/>
        <end position="78"/>
    </location>
</feature>
<feature type="transmembrane region" description="Helical" evidence="1">
    <location>
        <begin position="79"/>
        <end position="97"/>
    </location>
</feature>
<feature type="topological domain" description="Periplasmic" evidence="1">
    <location>
        <begin position="98"/>
        <end position="107"/>
    </location>
</feature>
<feature type="transmembrane region" description="Helical" evidence="1">
    <location>
        <begin position="108"/>
        <end position="126"/>
    </location>
</feature>
<feature type="topological domain" description="Cytoplasmic" evidence="1">
    <location>
        <begin position="127"/>
        <end position="197"/>
    </location>
</feature>
<feature type="transmembrane region" description="Helical" evidence="1">
    <location>
        <begin position="198"/>
        <end position="216"/>
    </location>
</feature>
<feature type="topological domain" description="Periplasmic" evidence="1">
    <location>
        <begin position="217"/>
        <end position="228"/>
    </location>
</feature>
<feature type="transmembrane region" description="Helical" evidence="1">
    <location>
        <begin position="229"/>
        <end position="247"/>
    </location>
</feature>
<feature type="topological domain" description="Cytoplasmic" evidence="1">
    <location>
        <begin position="248"/>
        <end position="268"/>
    </location>
</feature>
<feature type="transmembrane region" description="Helical" evidence="1">
    <location>
        <begin position="269"/>
        <end position="287"/>
    </location>
</feature>
<feature type="topological domain" description="Periplasmic" evidence="1">
    <location>
        <begin position="288"/>
        <end position="296"/>
    </location>
</feature>
<evidence type="ECO:0000255" key="1">
    <source>
        <dbReference type="HAMAP-Rule" id="MF_00154"/>
    </source>
</evidence>